<protein>
    <recommendedName>
        <fullName>Aspartate carbamoyltransferase regulatory chain</fullName>
    </recommendedName>
</protein>
<accession>Q8PXK6</accession>
<reference key="1">
    <citation type="journal article" date="2002" name="J. Mol. Microbiol. Biotechnol.">
        <title>The genome of Methanosarcina mazei: evidence for lateral gene transfer between Bacteria and Archaea.</title>
        <authorList>
            <person name="Deppenmeier U."/>
            <person name="Johann A."/>
            <person name="Hartsch T."/>
            <person name="Merkl R."/>
            <person name="Schmitz R.A."/>
            <person name="Martinez-Arias R."/>
            <person name="Henne A."/>
            <person name="Wiezer A."/>
            <person name="Baeumer S."/>
            <person name="Jacobi C."/>
            <person name="Brueggemann H."/>
            <person name="Lienard T."/>
            <person name="Christmann A."/>
            <person name="Boemecke M."/>
            <person name="Steckel S."/>
            <person name="Bhattacharyya A."/>
            <person name="Lykidis A."/>
            <person name="Overbeek R."/>
            <person name="Klenk H.-P."/>
            <person name="Gunsalus R.P."/>
            <person name="Fritz H.-J."/>
            <person name="Gottschalk G."/>
        </authorList>
    </citation>
    <scope>NUCLEOTIDE SEQUENCE [LARGE SCALE GENOMIC DNA]</scope>
    <source>
        <strain>ATCC BAA-159 / DSM 3647 / Goe1 / Go1 / JCM 11833 / OCM 88</strain>
    </source>
</reference>
<name>PYRI_METMA</name>
<evidence type="ECO:0000250" key="1"/>
<evidence type="ECO:0000305" key="2"/>
<sequence length="156" mass="17011">MKEKRDLKVQAIESGTVIDHIKSGQALNVLRILGISSAFRATISFVMNAPGAGGKKDVVKIEGKELSVEELNRIALISPKATINIIRDFVVVQKNNVVLPSYVEGVVRCTNSSCISNSSEPIKSKFSVIQSEEEGVSLHCLYCEHVISEEIAENLL</sequence>
<comment type="function">
    <text evidence="1">Involved in allosteric regulation of aspartate carbamoyltransferase.</text>
</comment>
<comment type="subunit">
    <text evidence="1">Contains catalytic and regulatory chains.</text>
</comment>
<comment type="similarity">
    <text evidence="2">Belongs to the PyrI family.</text>
</comment>
<dbReference type="EMBL" id="AE008384">
    <property type="protein sequence ID" value="AAM30908.1"/>
    <property type="molecule type" value="Genomic_DNA"/>
</dbReference>
<dbReference type="RefSeq" id="WP_011033161.1">
    <property type="nucleotide sequence ID" value="NC_003901.1"/>
</dbReference>
<dbReference type="SMR" id="Q8PXK6"/>
<dbReference type="GeneID" id="82160246"/>
<dbReference type="KEGG" id="mma:MM_1212"/>
<dbReference type="PATRIC" id="fig|192952.21.peg.1417"/>
<dbReference type="eggNOG" id="arCOG04229">
    <property type="taxonomic scope" value="Archaea"/>
</dbReference>
<dbReference type="HOGENOM" id="CLU_128576_0_0_2"/>
<dbReference type="Proteomes" id="UP000000595">
    <property type="component" value="Chromosome"/>
</dbReference>
<dbReference type="GO" id="GO:0009347">
    <property type="term" value="C:aspartate carbamoyltransferase complex"/>
    <property type="evidence" value="ECO:0007669"/>
    <property type="project" value="InterPro"/>
</dbReference>
<dbReference type="GO" id="GO:0046872">
    <property type="term" value="F:metal ion binding"/>
    <property type="evidence" value="ECO:0007669"/>
    <property type="project" value="UniProtKB-KW"/>
</dbReference>
<dbReference type="GO" id="GO:0006207">
    <property type="term" value="P:'de novo' pyrimidine nucleobase biosynthetic process"/>
    <property type="evidence" value="ECO:0007669"/>
    <property type="project" value="InterPro"/>
</dbReference>
<dbReference type="GO" id="GO:0006221">
    <property type="term" value="P:pyrimidine nucleotide biosynthetic process"/>
    <property type="evidence" value="ECO:0007669"/>
    <property type="project" value="UniProtKB-UniRule"/>
</dbReference>
<dbReference type="Gene3D" id="2.30.30.20">
    <property type="entry name" value="Aspartate carbamoyltransferase regulatory subunit, C-terminal domain"/>
    <property type="match status" value="1"/>
</dbReference>
<dbReference type="Gene3D" id="3.30.70.140">
    <property type="entry name" value="Aspartate carbamoyltransferase regulatory subunit, N-terminal domain"/>
    <property type="match status" value="1"/>
</dbReference>
<dbReference type="HAMAP" id="MF_00002">
    <property type="entry name" value="Asp_carb_tr_reg"/>
    <property type="match status" value="1"/>
</dbReference>
<dbReference type="InterPro" id="IPR020545">
    <property type="entry name" value="Asp_carbamoyltransf_reg_N"/>
</dbReference>
<dbReference type="InterPro" id="IPR002801">
    <property type="entry name" value="Asp_carbamoylTrfase_reg"/>
</dbReference>
<dbReference type="InterPro" id="IPR020542">
    <property type="entry name" value="Asp_carbamoyltrfase_reg_C"/>
</dbReference>
<dbReference type="InterPro" id="IPR036792">
    <property type="entry name" value="Asp_carbatrfase_reg_C_sf"/>
</dbReference>
<dbReference type="InterPro" id="IPR036793">
    <property type="entry name" value="Asp_carbatrfase_reg_N_sf"/>
</dbReference>
<dbReference type="NCBIfam" id="TIGR00240">
    <property type="entry name" value="ATCase_reg"/>
    <property type="match status" value="1"/>
</dbReference>
<dbReference type="PANTHER" id="PTHR35805">
    <property type="entry name" value="ASPARTATE CARBAMOYLTRANSFERASE REGULATORY CHAIN"/>
    <property type="match status" value="1"/>
</dbReference>
<dbReference type="PANTHER" id="PTHR35805:SF1">
    <property type="entry name" value="ASPARTATE CARBAMOYLTRANSFERASE REGULATORY CHAIN"/>
    <property type="match status" value="1"/>
</dbReference>
<dbReference type="Pfam" id="PF01948">
    <property type="entry name" value="PyrI"/>
    <property type="match status" value="1"/>
</dbReference>
<dbReference type="Pfam" id="PF02748">
    <property type="entry name" value="PyrI_C"/>
    <property type="match status" value="1"/>
</dbReference>
<dbReference type="SUPFAM" id="SSF57825">
    <property type="entry name" value="Aspartate carbamoyltransferase, Regulatory-chain, C-terminal domain"/>
    <property type="match status" value="1"/>
</dbReference>
<dbReference type="SUPFAM" id="SSF54893">
    <property type="entry name" value="Aspartate carbamoyltransferase, Regulatory-chain, N-terminal domain"/>
    <property type="match status" value="1"/>
</dbReference>
<feature type="chain" id="PRO_0000142333" description="Aspartate carbamoyltransferase regulatory chain">
    <location>
        <begin position="1"/>
        <end position="156"/>
    </location>
</feature>
<feature type="binding site" evidence="1">
    <location>
        <position position="109"/>
    </location>
    <ligand>
        <name>Zn(2+)</name>
        <dbReference type="ChEBI" id="CHEBI:29105"/>
    </ligand>
</feature>
<feature type="binding site" evidence="1">
    <location>
        <position position="114"/>
    </location>
    <ligand>
        <name>Zn(2+)</name>
        <dbReference type="ChEBI" id="CHEBI:29105"/>
    </ligand>
</feature>
<feature type="binding site" evidence="1">
    <location>
        <position position="140"/>
    </location>
    <ligand>
        <name>Zn(2+)</name>
        <dbReference type="ChEBI" id="CHEBI:29105"/>
    </ligand>
</feature>
<feature type="binding site" evidence="1">
    <location>
        <position position="143"/>
    </location>
    <ligand>
        <name>Zn(2+)</name>
        <dbReference type="ChEBI" id="CHEBI:29105"/>
    </ligand>
</feature>
<organism>
    <name type="scientific">Methanosarcina mazei (strain ATCC BAA-159 / DSM 3647 / Goe1 / Go1 / JCM 11833 / OCM 88)</name>
    <name type="common">Methanosarcina frisia</name>
    <dbReference type="NCBI Taxonomy" id="192952"/>
    <lineage>
        <taxon>Archaea</taxon>
        <taxon>Methanobacteriati</taxon>
        <taxon>Methanobacteriota</taxon>
        <taxon>Stenosarchaea group</taxon>
        <taxon>Methanomicrobia</taxon>
        <taxon>Methanosarcinales</taxon>
        <taxon>Methanosarcinaceae</taxon>
        <taxon>Methanosarcina</taxon>
    </lineage>
</organism>
<gene>
    <name type="primary">pyrI</name>
    <name type="ordered locus">MM_1212</name>
</gene>
<keyword id="KW-0479">Metal-binding</keyword>
<keyword id="KW-0665">Pyrimidine biosynthesis</keyword>
<keyword id="KW-0862">Zinc</keyword>
<proteinExistence type="inferred from homology"/>